<gene>
    <name evidence="1" type="primary">nusB</name>
    <name type="ordered locus">BSUIS_A0804</name>
</gene>
<protein>
    <recommendedName>
        <fullName evidence="1">Transcription antitermination protein NusB</fullName>
    </recommendedName>
    <alternativeName>
        <fullName evidence="1">Antitermination factor NusB</fullName>
    </alternativeName>
</protein>
<name>NUSB_BRUSI</name>
<proteinExistence type="inferred from homology"/>
<reference key="1">
    <citation type="submission" date="2007-12" db="EMBL/GenBank/DDBJ databases">
        <title>Brucella suis ATCC 23445 whole genome shotgun sequencing project.</title>
        <authorList>
            <person name="Setubal J.C."/>
            <person name="Bowns C."/>
            <person name="Boyle S."/>
            <person name="Crasta O.R."/>
            <person name="Czar M.J."/>
            <person name="Dharmanolla C."/>
            <person name="Gillespie J.J."/>
            <person name="Kenyon R.W."/>
            <person name="Lu J."/>
            <person name="Mane S."/>
            <person name="Mohapatra S."/>
            <person name="Nagrani S."/>
            <person name="Purkayastha A."/>
            <person name="Rajasimha H.K."/>
            <person name="Shallom J.M."/>
            <person name="Shallom S."/>
            <person name="Shukla M."/>
            <person name="Snyder E.E."/>
            <person name="Sobral B.W."/>
            <person name="Wattam A.R."/>
            <person name="Will R."/>
            <person name="Williams K."/>
            <person name="Yoo H."/>
            <person name="Bruce D."/>
            <person name="Detter C."/>
            <person name="Munk C."/>
            <person name="Brettin T.S."/>
        </authorList>
    </citation>
    <scope>NUCLEOTIDE SEQUENCE [LARGE SCALE GENOMIC DNA]</scope>
    <source>
        <strain>ATCC 23445 / NCTC 10510</strain>
    </source>
</reference>
<comment type="function">
    <text evidence="1">Involved in transcription antitermination. Required for transcription of ribosomal RNA (rRNA) genes. Binds specifically to the boxA antiterminator sequence of the ribosomal RNA (rrn) operons.</text>
</comment>
<comment type="similarity">
    <text evidence="1">Belongs to the NusB family.</text>
</comment>
<organism>
    <name type="scientific">Brucella suis (strain ATCC 23445 / NCTC 10510)</name>
    <dbReference type="NCBI Taxonomy" id="470137"/>
    <lineage>
        <taxon>Bacteria</taxon>
        <taxon>Pseudomonadati</taxon>
        <taxon>Pseudomonadota</taxon>
        <taxon>Alphaproteobacteria</taxon>
        <taxon>Hyphomicrobiales</taxon>
        <taxon>Brucellaceae</taxon>
        <taxon>Brucella/Ochrobactrum group</taxon>
        <taxon>Brucella</taxon>
    </lineage>
</organism>
<keyword id="KW-0694">RNA-binding</keyword>
<keyword id="KW-0804">Transcription</keyword>
<keyword id="KW-0889">Transcription antitermination</keyword>
<keyword id="KW-0805">Transcription regulation</keyword>
<sequence length="171" mass="18939">MNSIPEGRPTPNLPRTANKRGVARLAAAQALYQMDVAGTGVMEVVAEYEAFRLGKEVDGTQYLDADPQWFRAIVAGVVEDQLKLDPMIHQALTEDWPLSRLDSTLRAILRAGAWELKARKDVPTAVIVSEYVDIAKAFYTEDEPKLVNAVLDRLALVIRGESRGAKPRHKS</sequence>
<feature type="chain" id="PRO_1000075179" description="Transcription antitermination protein NusB">
    <location>
        <begin position="1"/>
        <end position="171"/>
    </location>
</feature>
<evidence type="ECO:0000255" key="1">
    <source>
        <dbReference type="HAMAP-Rule" id="MF_00073"/>
    </source>
</evidence>
<accession>B0CL95</accession>
<dbReference type="EMBL" id="CP000911">
    <property type="protein sequence ID" value="ABY37875.1"/>
    <property type="molecule type" value="Genomic_DNA"/>
</dbReference>
<dbReference type="RefSeq" id="WP_006072523.1">
    <property type="nucleotide sequence ID" value="NC_010169.1"/>
</dbReference>
<dbReference type="SMR" id="B0CL95"/>
<dbReference type="KEGG" id="bmt:BSUIS_A0804"/>
<dbReference type="HOGENOM" id="CLU_087843_4_0_5"/>
<dbReference type="Proteomes" id="UP000008545">
    <property type="component" value="Chromosome I"/>
</dbReference>
<dbReference type="GO" id="GO:0005829">
    <property type="term" value="C:cytosol"/>
    <property type="evidence" value="ECO:0007669"/>
    <property type="project" value="TreeGrafter"/>
</dbReference>
<dbReference type="GO" id="GO:0003723">
    <property type="term" value="F:RNA binding"/>
    <property type="evidence" value="ECO:0007669"/>
    <property type="project" value="UniProtKB-UniRule"/>
</dbReference>
<dbReference type="GO" id="GO:0006353">
    <property type="term" value="P:DNA-templated transcription termination"/>
    <property type="evidence" value="ECO:0007669"/>
    <property type="project" value="UniProtKB-UniRule"/>
</dbReference>
<dbReference type="GO" id="GO:0031564">
    <property type="term" value="P:transcription antitermination"/>
    <property type="evidence" value="ECO:0007669"/>
    <property type="project" value="UniProtKB-KW"/>
</dbReference>
<dbReference type="Gene3D" id="1.10.940.10">
    <property type="entry name" value="NusB-like"/>
    <property type="match status" value="1"/>
</dbReference>
<dbReference type="HAMAP" id="MF_00073">
    <property type="entry name" value="NusB"/>
    <property type="match status" value="1"/>
</dbReference>
<dbReference type="InterPro" id="IPR035926">
    <property type="entry name" value="NusB-like_sf"/>
</dbReference>
<dbReference type="InterPro" id="IPR011605">
    <property type="entry name" value="NusB_fam"/>
</dbReference>
<dbReference type="InterPro" id="IPR006027">
    <property type="entry name" value="NusB_RsmB_TIM44"/>
</dbReference>
<dbReference type="NCBIfam" id="TIGR01951">
    <property type="entry name" value="nusB"/>
    <property type="match status" value="1"/>
</dbReference>
<dbReference type="PANTHER" id="PTHR11078:SF3">
    <property type="entry name" value="ANTITERMINATION NUSB DOMAIN-CONTAINING PROTEIN"/>
    <property type="match status" value="1"/>
</dbReference>
<dbReference type="PANTHER" id="PTHR11078">
    <property type="entry name" value="N UTILIZATION SUBSTANCE PROTEIN B-RELATED"/>
    <property type="match status" value="1"/>
</dbReference>
<dbReference type="Pfam" id="PF01029">
    <property type="entry name" value="NusB"/>
    <property type="match status" value="1"/>
</dbReference>
<dbReference type="SUPFAM" id="SSF48013">
    <property type="entry name" value="NusB-like"/>
    <property type="match status" value="1"/>
</dbReference>